<name>YQGQ_BACSU</name>
<protein>
    <recommendedName>
        <fullName>Uncharacterized protein YqgQ</fullName>
    </recommendedName>
</protein>
<keyword id="KW-0002">3D-structure</keyword>
<keyword id="KW-1185">Reference proteome</keyword>
<gene>
    <name type="primary">yqgQ</name>
    <name type="ordered locus">BSU24860</name>
</gene>
<evidence type="ECO:0007829" key="1">
    <source>
        <dbReference type="PDB" id="2NN4"/>
    </source>
</evidence>
<proteinExistence type="evidence at protein level"/>
<dbReference type="EMBL" id="D84432">
    <property type="protein sequence ID" value="BAA12520.1"/>
    <property type="molecule type" value="Genomic_DNA"/>
</dbReference>
<dbReference type="EMBL" id="AL009126">
    <property type="protein sequence ID" value="CAB14417.1"/>
    <property type="molecule type" value="Genomic_DNA"/>
</dbReference>
<dbReference type="PIR" id="C69957">
    <property type="entry name" value="C69957"/>
</dbReference>
<dbReference type="RefSeq" id="NP_390366.1">
    <property type="nucleotide sequence ID" value="NC_000964.3"/>
</dbReference>
<dbReference type="RefSeq" id="WP_004399107.1">
    <property type="nucleotide sequence ID" value="NZ_OZ025638.1"/>
</dbReference>
<dbReference type="PDB" id="2NN4">
    <property type="method" value="X-ray"/>
    <property type="resolution" value="2.10 A"/>
    <property type="chains" value="A/B/C=2-71"/>
</dbReference>
<dbReference type="PDBsum" id="2NN4"/>
<dbReference type="SMR" id="P54494"/>
<dbReference type="FunCoup" id="P54494">
    <property type="interactions" value="23"/>
</dbReference>
<dbReference type="STRING" id="224308.BSU24860"/>
<dbReference type="PaxDb" id="224308-BSU24860"/>
<dbReference type="EnsemblBacteria" id="CAB14417">
    <property type="protein sequence ID" value="CAB14417"/>
    <property type="gene ID" value="BSU_24860"/>
</dbReference>
<dbReference type="GeneID" id="938210"/>
<dbReference type="KEGG" id="bsu:BSU24860"/>
<dbReference type="PATRIC" id="fig|224308.179.peg.2705"/>
<dbReference type="eggNOG" id="COG4483">
    <property type="taxonomic scope" value="Bacteria"/>
</dbReference>
<dbReference type="InParanoid" id="P54494"/>
<dbReference type="OrthoDB" id="2361671at2"/>
<dbReference type="PhylomeDB" id="P54494"/>
<dbReference type="BioCyc" id="BSUB:BSU24860-MONOMER"/>
<dbReference type="EvolutionaryTrace" id="P54494"/>
<dbReference type="Proteomes" id="UP000001570">
    <property type="component" value="Chromosome"/>
</dbReference>
<dbReference type="Gene3D" id="1.10.287.760">
    <property type="entry name" value="YqgQ-like"/>
    <property type="match status" value="1"/>
</dbReference>
<dbReference type="InterPro" id="IPR009256">
    <property type="entry name" value="YqgQ-like"/>
</dbReference>
<dbReference type="InterPro" id="IPR023164">
    <property type="entry name" value="YqgQ-like_sf"/>
</dbReference>
<dbReference type="Pfam" id="PF06014">
    <property type="entry name" value="YqgQ-like"/>
    <property type="match status" value="1"/>
</dbReference>
<dbReference type="SUPFAM" id="SSF158379">
    <property type="entry name" value="YqgQ-like"/>
    <property type="match status" value="1"/>
</dbReference>
<organism>
    <name type="scientific">Bacillus subtilis (strain 168)</name>
    <dbReference type="NCBI Taxonomy" id="224308"/>
    <lineage>
        <taxon>Bacteria</taxon>
        <taxon>Bacillati</taxon>
        <taxon>Bacillota</taxon>
        <taxon>Bacilli</taxon>
        <taxon>Bacillales</taxon>
        <taxon>Bacillaceae</taxon>
        <taxon>Bacillus</taxon>
    </lineage>
</organism>
<reference key="1">
    <citation type="journal article" date="1996" name="Microbiology">
        <title>Systematic sequencing of the 283 kb 210 degrees-232 degrees region of the Bacillus subtilis genome containing the skin element and many sporulation genes.</title>
        <authorList>
            <person name="Mizuno M."/>
            <person name="Masuda S."/>
            <person name="Takemaru K."/>
            <person name="Hosono S."/>
            <person name="Sato T."/>
            <person name="Takeuchi M."/>
            <person name="Kobayashi Y."/>
        </authorList>
    </citation>
    <scope>NUCLEOTIDE SEQUENCE [GENOMIC DNA]</scope>
    <source>
        <strain>168 / JH642</strain>
    </source>
</reference>
<reference key="2">
    <citation type="journal article" date="1997" name="Nature">
        <title>The complete genome sequence of the Gram-positive bacterium Bacillus subtilis.</title>
        <authorList>
            <person name="Kunst F."/>
            <person name="Ogasawara N."/>
            <person name="Moszer I."/>
            <person name="Albertini A.M."/>
            <person name="Alloni G."/>
            <person name="Azevedo V."/>
            <person name="Bertero M.G."/>
            <person name="Bessieres P."/>
            <person name="Bolotin A."/>
            <person name="Borchert S."/>
            <person name="Borriss R."/>
            <person name="Boursier L."/>
            <person name="Brans A."/>
            <person name="Braun M."/>
            <person name="Brignell S.C."/>
            <person name="Bron S."/>
            <person name="Brouillet S."/>
            <person name="Bruschi C.V."/>
            <person name="Caldwell B."/>
            <person name="Capuano V."/>
            <person name="Carter N.M."/>
            <person name="Choi S.-K."/>
            <person name="Codani J.-J."/>
            <person name="Connerton I.F."/>
            <person name="Cummings N.J."/>
            <person name="Daniel R.A."/>
            <person name="Denizot F."/>
            <person name="Devine K.M."/>
            <person name="Duesterhoeft A."/>
            <person name="Ehrlich S.D."/>
            <person name="Emmerson P.T."/>
            <person name="Entian K.-D."/>
            <person name="Errington J."/>
            <person name="Fabret C."/>
            <person name="Ferrari E."/>
            <person name="Foulger D."/>
            <person name="Fritz C."/>
            <person name="Fujita M."/>
            <person name="Fujita Y."/>
            <person name="Fuma S."/>
            <person name="Galizzi A."/>
            <person name="Galleron N."/>
            <person name="Ghim S.-Y."/>
            <person name="Glaser P."/>
            <person name="Goffeau A."/>
            <person name="Golightly E.J."/>
            <person name="Grandi G."/>
            <person name="Guiseppi G."/>
            <person name="Guy B.J."/>
            <person name="Haga K."/>
            <person name="Haiech J."/>
            <person name="Harwood C.R."/>
            <person name="Henaut A."/>
            <person name="Hilbert H."/>
            <person name="Holsappel S."/>
            <person name="Hosono S."/>
            <person name="Hullo M.-F."/>
            <person name="Itaya M."/>
            <person name="Jones L.-M."/>
            <person name="Joris B."/>
            <person name="Karamata D."/>
            <person name="Kasahara Y."/>
            <person name="Klaerr-Blanchard M."/>
            <person name="Klein C."/>
            <person name="Kobayashi Y."/>
            <person name="Koetter P."/>
            <person name="Koningstein G."/>
            <person name="Krogh S."/>
            <person name="Kumano M."/>
            <person name="Kurita K."/>
            <person name="Lapidus A."/>
            <person name="Lardinois S."/>
            <person name="Lauber J."/>
            <person name="Lazarevic V."/>
            <person name="Lee S.-M."/>
            <person name="Levine A."/>
            <person name="Liu H."/>
            <person name="Masuda S."/>
            <person name="Mauel C."/>
            <person name="Medigue C."/>
            <person name="Medina N."/>
            <person name="Mellado R.P."/>
            <person name="Mizuno M."/>
            <person name="Moestl D."/>
            <person name="Nakai S."/>
            <person name="Noback M."/>
            <person name="Noone D."/>
            <person name="O'Reilly M."/>
            <person name="Ogawa K."/>
            <person name="Ogiwara A."/>
            <person name="Oudega B."/>
            <person name="Park S.-H."/>
            <person name="Parro V."/>
            <person name="Pohl T.M."/>
            <person name="Portetelle D."/>
            <person name="Porwollik S."/>
            <person name="Prescott A.M."/>
            <person name="Presecan E."/>
            <person name="Pujic P."/>
            <person name="Purnelle B."/>
            <person name="Rapoport G."/>
            <person name="Rey M."/>
            <person name="Reynolds S."/>
            <person name="Rieger M."/>
            <person name="Rivolta C."/>
            <person name="Rocha E."/>
            <person name="Roche B."/>
            <person name="Rose M."/>
            <person name="Sadaie Y."/>
            <person name="Sato T."/>
            <person name="Scanlan E."/>
            <person name="Schleich S."/>
            <person name="Schroeter R."/>
            <person name="Scoffone F."/>
            <person name="Sekiguchi J."/>
            <person name="Sekowska A."/>
            <person name="Seror S.J."/>
            <person name="Serror P."/>
            <person name="Shin B.-S."/>
            <person name="Soldo B."/>
            <person name="Sorokin A."/>
            <person name="Tacconi E."/>
            <person name="Takagi T."/>
            <person name="Takahashi H."/>
            <person name="Takemaru K."/>
            <person name="Takeuchi M."/>
            <person name="Tamakoshi A."/>
            <person name="Tanaka T."/>
            <person name="Terpstra P."/>
            <person name="Tognoni A."/>
            <person name="Tosato V."/>
            <person name="Uchiyama S."/>
            <person name="Vandenbol M."/>
            <person name="Vannier F."/>
            <person name="Vassarotti A."/>
            <person name="Viari A."/>
            <person name="Wambutt R."/>
            <person name="Wedler E."/>
            <person name="Wedler H."/>
            <person name="Weitzenegger T."/>
            <person name="Winters P."/>
            <person name="Wipat A."/>
            <person name="Yamamoto H."/>
            <person name="Yamane K."/>
            <person name="Yasumoto K."/>
            <person name="Yata K."/>
            <person name="Yoshida K."/>
            <person name="Yoshikawa H.-F."/>
            <person name="Zumstein E."/>
            <person name="Yoshikawa H."/>
            <person name="Danchin A."/>
        </authorList>
    </citation>
    <scope>NUCLEOTIDE SEQUENCE [LARGE SCALE GENOMIC DNA]</scope>
    <source>
        <strain>168</strain>
    </source>
</reference>
<reference key="3">
    <citation type="submission" date="2006-10" db="PDB data bank">
        <title>Structure of a hypothetical protein from B. subtilis, Pfam:DUF910.</title>
        <authorList>
            <consortium name="New York structural genomix research consortium (NYSGXRC)"/>
        </authorList>
    </citation>
    <scope>X-RAY CRYSTALLOGRAPHY (2.1 ANGSTROMS)</scope>
</reference>
<accession>P54494</accession>
<sequence>MNTFYDVQQLLKTFGHIVYFGDRELEIEFMLDELKELYMNHMIEKEQWARAAAVLRKELEQTKNGRDFYKG</sequence>
<feature type="chain" id="PRO_0000049813" description="Uncharacterized protein YqgQ">
    <location>
        <begin position="1"/>
        <end position="71"/>
    </location>
</feature>
<feature type="helix" evidence="1">
    <location>
        <begin position="4"/>
        <end position="12"/>
    </location>
</feature>
<feature type="turn" evidence="1">
    <location>
        <begin position="13"/>
        <end position="15"/>
    </location>
</feature>
<feature type="helix" evidence="1">
    <location>
        <begin position="23"/>
        <end position="39"/>
    </location>
</feature>
<feature type="helix" evidence="1">
    <location>
        <begin position="45"/>
        <end position="61"/>
    </location>
</feature>